<reference key="1">
    <citation type="journal article" date="1987" name="J. Bacteriol.">
        <title>Cloning, nucleotide sequencing, and genetic mapping of the gene for small, acid-soluble spore protein gamma of Bacillus subtilis.</title>
        <authorList>
            <person name="Hackette R.H."/>
            <person name="Setlow P."/>
        </authorList>
    </citation>
    <scope>NUCLEOTIDE SEQUENCE [GENOMIC DNA]</scope>
</reference>
<reference key="2">
    <citation type="journal article" date="1997" name="Microbiology">
        <title>The Bacillus subtilis 168 chromosome from sspE to katA.</title>
        <authorList>
            <person name="Cummings N.J."/>
            <person name="Connerton I.F."/>
        </authorList>
    </citation>
    <scope>NUCLEOTIDE SEQUENCE [GENOMIC DNA]</scope>
    <source>
        <strain>168</strain>
    </source>
</reference>
<reference key="3">
    <citation type="journal article" date="1996" name="DNA Res.">
        <title>Cloning and sequencing of a 27.8-kb nucleotide sequence of the 79 degrees-81 degrees region of the Bacillus subtilis genome containing the sspE locus.</title>
        <authorList>
            <person name="Yamamoto H."/>
            <person name="Uchiyama S."/>
            <person name="Sekiguchi J."/>
        </authorList>
    </citation>
    <scope>NUCLEOTIDE SEQUENCE [GENOMIC DNA]</scope>
</reference>
<reference key="4">
    <citation type="journal article" date="1997" name="Nature">
        <title>The complete genome sequence of the Gram-positive bacterium Bacillus subtilis.</title>
        <authorList>
            <person name="Kunst F."/>
            <person name="Ogasawara N."/>
            <person name="Moszer I."/>
            <person name="Albertini A.M."/>
            <person name="Alloni G."/>
            <person name="Azevedo V."/>
            <person name="Bertero M.G."/>
            <person name="Bessieres P."/>
            <person name="Bolotin A."/>
            <person name="Borchert S."/>
            <person name="Borriss R."/>
            <person name="Boursier L."/>
            <person name="Brans A."/>
            <person name="Braun M."/>
            <person name="Brignell S.C."/>
            <person name="Bron S."/>
            <person name="Brouillet S."/>
            <person name="Bruschi C.V."/>
            <person name="Caldwell B."/>
            <person name="Capuano V."/>
            <person name="Carter N.M."/>
            <person name="Choi S.-K."/>
            <person name="Codani J.-J."/>
            <person name="Connerton I.F."/>
            <person name="Cummings N.J."/>
            <person name="Daniel R.A."/>
            <person name="Denizot F."/>
            <person name="Devine K.M."/>
            <person name="Duesterhoeft A."/>
            <person name="Ehrlich S.D."/>
            <person name="Emmerson P.T."/>
            <person name="Entian K.-D."/>
            <person name="Errington J."/>
            <person name="Fabret C."/>
            <person name="Ferrari E."/>
            <person name="Foulger D."/>
            <person name="Fritz C."/>
            <person name="Fujita M."/>
            <person name="Fujita Y."/>
            <person name="Fuma S."/>
            <person name="Galizzi A."/>
            <person name="Galleron N."/>
            <person name="Ghim S.-Y."/>
            <person name="Glaser P."/>
            <person name="Goffeau A."/>
            <person name="Golightly E.J."/>
            <person name="Grandi G."/>
            <person name="Guiseppi G."/>
            <person name="Guy B.J."/>
            <person name="Haga K."/>
            <person name="Haiech J."/>
            <person name="Harwood C.R."/>
            <person name="Henaut A."/>
            <person name="Hilbert H."/>
            <person name="Holsappel S."/>
            <person name="Hosono S."/>
            <person name="Hullo M.-F."/>
            <person name="Itaya M."/>
            <person name="Jones L.-M."/>
            <person name="Joris B."/>
            <person name="Karamata D."/>
            <person name="Kasahara Y."/>
            <person name="Klaerr-Blanchard M."/>
            <person name="Klein C."/>
            <person name="Kobayashi Y."/>
            <person name="Koetter P."/>
            <person name="Koningstein G."/>
            <person name="Krogh S."/>
            <person name="Kumano M."/>
            <person name="Kurita K."/>
            <person name="Lapidus A."/>
            <person name="Lardinois S."/>
            <person name="Lauber J."/>
            <person name="Lazarevic V."/>
            <person name="Lee S.-M."/>
            <person name="Levine A."/>
            <person name="Liu H."/>
            <person name="Masuda S."/>
            <person name="Mauel C."/>
            <person name="Medigue C."/>
            <person name="Medina N."/>
            <person name="Mellado R.P."/>
            <person name="Mizuno M."/>
            <person name="Moestl D."/>
            <person name="Nakai S."/>
            <person name="Noback M."/>
            <person name="Noone D."/>
            <person name="O'Reilly M."/>
            <person name="Ogawa K."/>
            <person name="Ogiwara A."/>
            <person name="Oudega B."/>
            <person name="Park S.-H."/>
            <person name="Parro V."/>
            <person name="Pohl T.M."/>
            <person name="Portetelle D."/>
            <person name="Porwollik S."/>
            <person name="Prescott A.M."/>
            <person name="Presecan E."/>
            <person name="Pujic P."/>
            <person name="Purnelle B."/>
            <person name="Rapoport G."/>
            <person name="Rey M."/>
            <person name="Reynolds S."/>
            <person name="Rieger M."/>
            <person name="Rivolta C."/>
            <person name="Rocha E."/>
            <person name="Roche B."/>
            <person name="Rose M."/>
            <person name="Sadaie Y."/>
            <person name="Sato T."/>
            <person name="Scanlan E."/>
            <person name="Schleich S."/>
            <person name="Schroeter R."/>
            <person name="Scoffone F."/>
            <person name="Sekiguchi J."/>
            <person name="Sekowska A."/>
            <person name="Seror S.J."/>
            <person name="Serror P."/>
            <person name="Shin B.-S."/>
            <person name="Soldo B."/>
            <person name="Sorokin A."/>
            <person name="Tacconi E."/>
            <person name="Takagi T."/>
            <person name="Takahashi H."/>
            <person name="Takemaru K."/>
            <person name="Takeuchi M."/>
            <person name="Tamakoshi A."/>
            <person name="Tanaka T."/>
            <person name="Terpstra P."/>
            <person name="Tognoni A."/>
            <person name="Tosato V."/>
            <person name="Uchiyama S."/>
            <person name="Vandenbol M."/>
            <person name="Vannier F."/>
            <person name="Vassarotti A."/>
            <person name="Viari A."/>
            <person name="Wambutt R."/>
            <person name="Wedler E."/>
            <person name="Wedler H."/>
            <person name="Weitzenegger T."/>
            <person name="Winters P."/>
            <person name="Wipat A."/>
            <person name="Yamamoto H."/>
            <person name="Yamane K."/>
            <person name="Yasumoto K."/>
            <person name="Yata K."/>
            <person name="Yoshida K."/>
            <person name="Yoshikawa H.-F."/>
            <person name="Zumstein E."/>
            <person name="Yoshikawa H."/>
            <person name="Danchin A."/>
        </authorList>
    </citation>
    <scope>NUCLEOTIDE SEQUENCE [LARGE SCALE GENOMIC DNA]</scope>
    <source>
        <strain>168</strain>
    </source>
</reference>
<reference key="5">
    <citation type="journal article" date="1999" name="Microbiology">
        <title>Transcription of genes near the sspE locus of the Bacillus subtilis genome.</title>
        <authorList>
            <person name="Yamamoto H."/>
            <person name="Mori M."/>
            <person name="Sekiguchi J."/>
        </authorList>
    </citation>
    <scope>INDUCTION</scope>
    <source>
        <strain>168</strain>
    </source>
</reference>
<evidence type="ECO:0000256" key="1">
    <source>
        <dbReference type="SAM" id="MobiDB-lite"/>
    </source>
</evidence>
<evidence type="ECO:0000269" key="2">
    <source>
    </source>
</evidence>
<evidence type="ECO:0000269" key="3">
    <source>
    </source>
</evidence>
<evidence type="ECO:0000305" key="4"/>
<name>SSPE_BACSU</name>
<keyword id="KW-1185">Reference proteome</keyword>
<keyword id="KW-0677">Repeat</keyword>
<keyword id="KW-0749">Sporulation</keyword>
<proteinExistence type="evidence at transcript level"/>
<gene>
    <name type="primary">sspE</name>
    <name type="ordered locus">BSU08660</name>
</gene>
<protein>
    <recommendedName>
        <fullName>Small, acid-soluble spore protein gamma-type</fullName>
        <shortName>SASP</shortName>
    </recommendedName>
</protein>
<sequence length="84" mass="9268">MANSNNFSKTNAQQVRKQNQQSAAGQGQFGTEFASETNAQQVRKQNQQSAGQQGQFGTEFASETDAQQVRQQNQSAEQNKQQNS</sequence>
<feature type="chain" id="PRO_0000196325" description="Small, acid-soluble spore protein gamma-type">
    <location>
        <begin position="1"/>
        <end position="84"/>
    </location>
</feature>
<feature type="repeat">
    <location>
        <begin position="21"/>
        <end position="47"/>
    </location>
</feature>
<feature type="repeat">
    <location>
        <begin position="48"/>
        <end position="74"/>
    </location>
</feature>
<feature type="region of interest" description="Disordered" evidence="1">
    <location>
        <begin position="1"/>
        <end position="84"/>
    </location>
</feature>
<feature type="compositionally biased region" description="Polar residues" evidence="1">
    <location>
        <begin position="1"/>
        <end position="25"/>
    </location>
</feature>
<feature type="compositionally biased region" description="Polar residues" evidence="1">
    <location>
        <begin position="34"/>
        <end position="44"/>
    </location>
</feature>
<feature type="compositionally biased region" description="Low complexity" evidence="1">
    <location>
        <begin position="45"/>
        <end position="57"/>
    </location>
</feature>
<feature type="compositionally biased region" description="Low complexity" evidence="1">
    <location>
        <begin position="71"/>
        <end position="84"/>
    </location>
</feature>
<feature type="site" description="Cleavage; by spore protease" evidence="3">
    <location>
        <begin position="32"/>
        <end position="33"/>
    </location>
</feature>
<feature type="site" description="Cleavage; by spore protease" evidence="3">
    <location>
        <begin position="59"/>
        <end position="60"/>
    </location>
</feature>
<dbReference type="EMBL" id="M16184">
    <property type="protein sequence ID" value="AAA22836.1"/>
    <property type="molecule type" value="Genomic_DNA"/>
</dbReference>
<dbReference type="EMBL" id="Z82044">
    <property type="protein sequence ID" value="CAB04809.1"/>
    <property type="molecule type" value="Genomic_DNA"/>
</dbReference>
<dbReference type="EMBL" id="D85082">
    <property type="protein sequence ID" value="BAA24485.1"/>
    <property type="molecule type" value="Genomic_DNA"/>
</dbReference>
<dbReference type="EMBL" id="AL009126">
    <property type="protein sequence ID" value="CAB12694.1"/>
    <property type="molecule type" value="Genomic_DNA"/>
</dbReference>
<dbReference type="PIR" id="A26873">
    <property type="entry name" value="A26873"/>
</dbReference>
<dbReference type="RefSeq" id="NP_388746.1">
    <property type="nucleotide sequence ID" value="NC_000964.3"/>
</dbReference>
<dbReference type="RefSeq" id="WP_003233541.1">
    <property type="nucleotide sequence ID" value="NZ_OZ025638.1"/>
</dbReference>
<dbReference type="FunCoup" id="P07784">
    <property type="interactions" value="11"/>
</dbReference>
<dbReference type="STRING" id="224308.BSU08660"/>
<dbReference type="PaxDb" id="224308-BSU08660"/>
<dbReference type="EnsemblBacteria" id="CAB12694">
    <property type="protein sequence ID" value="CAB12694"/>
    <property type="gene ID" value="BSU_08660"/>
</dbReference>
<dbReference type="GeneID" id="939716"/>
<dbReference type="KEGG" id="bsu:BSU08660"/>
<dbReference type="PATRIC" id="fig|224308.179.peg.934"/>
<dbReference type="eggNOG" id="ENOG5033CNQ">
    <property type="taxonomic scope" value="Bacteria"/>
</dbReference>
<dbReference type="InParanoid" id="P07784"/>
<dbReference type="OrthoDB" id="2456029at2"/>
<dbReference type="BioCyc" id="BSUB:BSU08660-MONOMER"/>
<dbReference type="Proteomes" id="UP000001570">
    <property type="component" value="Chromosome"/>
</dbReference>
<dbReference type="GO" id="GO:0030435">
    <property type="term" value="P:sporulation resulting in formation of a cellular spore"/>
    <property type="evidence" value="ECO:0007669"/>
    <property type="project" value="UniProtKB-KW"/>
</dbReference>
<dbReference type="InterPro" id="IPR006341">
    <property type="entry name" value="Spore_gamma"/>
</dbReference>
<dbReference type="NCBIfam" id="TIGR01442">
    <property type="entry name" value="SASP_gamma"/>
    <property type="match status" value="1"/>
</dbReference>
<dbReference type="Pfam" id="PF04259">
    <property type="entry name" value="SASP_gamma"/>
    <property type="match status" value="1"/>
</dbReference>
<organism>
    <name type="scientific">Bacillus subtilis (strain 168)</name>
    <dbReference type="NCBI Taxonomy" id="224308"/>
    <lineage>
        <taxon>Bacteria</taxon>
        <taxon>Bacillati</taxon>
        <taxon>Bacillota</taxon>
        <taxon>Bacilli</taxon>
        <taxon>Bacillales</taxon>
        <taxon>Bacillaceae</taxon>
        <taxon>Bacillus</taxon>
    </lineage>
</organism>
<accession>P07784</accession>
<comment type="function">
    <text>SASP are proteins degraded in the first minutes of spore germination and provide amino acids for both new protein synthesis and metabolism. These proteins may be involved in dormant spore's high resistance to UV light.</text>
</comment>
<comment type="induction">
    <text evidence="2">Monocistronically transcribed in the late sporulation phase and cotranscribed with mutY and/or fabL during exponential growth. However, sspE is not translated during this period.</text>
</comment>
<comment type="similarity">
    <text evidence="4">Belongs to the gamma-type SASP family.</text>
</comment>